<proteinExistence type="evidence at protein level"/>
<reference key="1">
    <citation type="journal article" date="1998" name="Arch. Biochem. Biophys.">
        <title>Analysis of the gene encoding cyclomaltodextrinase from alkalophilic Bacillus sp. I-5 and characterization of enzymatic properties.</title>
        <authorList>
            <person name="Kim T.J."/>
            <person name="Shin J.H."/>
            <person name="Oh J.H."/>
            <person name="Kim M.J."/>
            <person name="Lee S.B."/>
            <person name="Ryu S."/>
            <person name="Kwon K."/>
            <person name="Kim J.W."/>
            <person name="Choi E.H."/>
            <person name="Robyt J.F."/>
            <person name="Park K.H."/>
        </authorList>
    </citation>
    <scope>NUCLEOTIDE SEQUENCE [GENOMIC DNA]</scope>
    <scope>PROTEIN SEQUENCE OF 1-7</scope>
    <scope>FUNCTION</scope>
    <scope>CATALYTIC ACTIVITY</scope>
    <scope>SUBSTRATE SPECIFICITY</scope>
    <scope>ACTIVITY REGULATION</scope>
    <scope>BIOPHYSICOCHEMICAL PROPERTIES</scope>
    <scope>SUBUNIT</scope>
    <scope>BIOTECHNOLOGY</scope>
    <scope>MUTAGENESIS OF VAL-380 AND ILE-388</scope>
    <source>
        <strain evidence="10 14">I-5</strain>
    </source>
</reference>
<reference key="2">
    <citation type="journal article" date="2000" name="Arch. Biochem. Biophys.">
        <title>Kinetics and inhibition of cyclomaltodextrinase from alkalophilic Bacillus sp. I-5.</title>
        <authorList>
            <person name="Kim M.J."/>
            <person name="Park W.S."/>
            <person name="Lee H.S."/>
            <person name="Kim T.J."/>
            <person name="Shin J.H."/>
            <person name="Yoo S.H."/>
            <person name="Cheong T.K."/>
            <person name="Ryu S."/>
            <person name="Kim J.C."/>
            <person name="Kim J.W."/>
            <person name="Moon T.W."/>
            <person name="Robyt J.F."/>
            <person name="Park K.H."/>
        </authorList>
    </citation>
    <scope>FUNCTION</scope>
    <scope>CATALYTIC ACTIVITY</scope>
    <scope>SUBSTRATE SPECIFICITY</scope>
    <scope>ACTIVITY REGULATION</scope>
    <scope>BIOPHYSICOCHEMICAL PROPERTIES</scope>
    <scope>BIOTECHNOLOGY</scope>
    <scope>REACTION MECHANISM</scope>
    <source>
        <strain evidence="7">I-5</strain>
    </source>
</reference>
<reference key="3">
    <citation type="journal article" date="2006" name="J. Agric. Food Chem.">
        <title>Modification of rice starch by selective degradation of amylose using alkalophilic Bacillus cyclomaltodextrinase.</title>
        <authorList>
            <person name="Auh J.H."/>
            <person name="Chae H.Y."/>
            <person name="Kim Y.R."/>
            <person name="Shim K.H."/>
            <person name="Yoo S.H."/>
            <person name="Park K.H."/>
        </authorList>
    </citation>
    <scope>FUNCTION</scope>
    <scope>CATALYTIC ACTIVITY</scope>
    <scope>SUBSTRATE SPECIFICITY</scope>
    <scope>BIOPHYSICOCHEMICAL PROPERTIES</scope>
    <scope>BIOTECHNOLOGY</scope>
    <source>
        <strain evidence="9">I-5</strain>
    </source>
</reference>
<reference evidence="15" key="4">
    <citation type="journal article" date="2002" name="J. Biol. Chem.">
        <title>Cyclomaltodextrinase, neopullulanase, and maltogenic amylase are nearly indistinguishable from each other.</title>
        <authorList>
            <person name="Lee H.S."/>
            <person name="Kim M.S."/>
            <person name="Cho H.S."/>
            <person name="Kim J.I."/>
            <person name="Kim T.J."/>
            <person name="Choi J.H."/>
            <person name="Park C."/>
            <person name="Lee H.S."/>
            <person name="Oh B.H."/>
            <person name="Park K.H."/>
        </authorList>
    </citation>
    <scope>X-RAY CRYSTALLOGRAPHY (3.20 ANGSTROMS) OF 1-541</scope>
    <scope>CATALYTIC ACTIVITY</scope>
    <scope>BIOPHYSICOCHEMICAL PROPERTIES</scope>
    <scope>SUBUNIT</scope>
    <source>
        <strain evidence="8">I-5</strain>
    </source>
</reference>
<keyword id="KW-0002">3D-structure</keyword>
<keyword id="KW-0106">Calcium</keyword>
<keyword id="KW-0119">Carbohydrate metabolism</keyword>
<keyword id="KW-0903">Direct protein sequencing</keyword>
<keyword id="KW-0326">Glycosidase</keyword>
<keyword id="KW-0378">Hydrolase</keyword>
<keyword id="KW-0479">Metal-binding</keyword>
<name>CDAS_BACSP</name>
<comment type="function">
    <text evidence="3 5 6">Hydrolyzes alpha-, beta- and gamma-cyclodextrins and the resulting linear maltodextrins, with the highest activity with beta-cyclodextrin (cyclomaltoheptaose). Soluble starch is hydrolyzed slowly, but it is nevertheless preferred over pullulan as a substrate. Is able to hydrolyze amylose and amylopectin, with a very strong preference for amylose, with maltose and glucose as the main products (PubMed:10620329, PubMed:16536613, PubMed:9606956). Maltose and glucose are the main hydrolysis products of cyclomaltodextrins, maltodextrins and starch, whereas panose is the main hydrolysis product of pullulan. Acarbose is partially hydrolyzed to glucose and pseudotrisaccharide. No activity with maltose as substrate (PubMed:10620329, PubMed:9606956). Has transglycosylating activity with high concentrations of maltotriose, maltotetraose and starch (PubMed:9606956).</text>
</comment>
<comment type="catalytic activity">
    <reaction evidence="3 4 5 6">
        <text>cyclomaltodextrin + H2O = linear maltodextrin</text>
        <dbReference type="Rhea" id="RHEA:23980"/>
        <dbReference type="Rhea" id="RHEA-COMP:14584"/>
        <dbReference type="Rhea" id="RHEA-COMP:14707"/>
        <dbReference type="ChEBI" id="CHEBI:15377"/>
        <dbReference type="ChEBI" id="CHEBI:17623"/>
        <dbReference type="ChEBI" id="CHEBI:18398"/>
        <dbReference type="EC" id="3.2.1.54"/>
    </reaction>
    <physiologicalReaction direction="left-to-right" evidence="3 4 5 6">
        <dbReference type="Rhea" id="RHEA:23981"/>
    </physiologicalReaction>
</comment>
<comment type="catalytic activity">
    <reaction evidence="6">
        <text>Hydrolysis of pullulan to panose (6-alpha-D-glucosylmaltose).</text>
        <dbReference type="EC" id="3.2.1.135"/>
    </reaction>
</comment>
<comment type="cofactor">
    <cofactor evidence="2">
        <name>Ca(2+)</name>
        <dbReference type="ChEBI" id="CHEBI:29108"/>
    </cofactor>
    <text evidence="2">Binds 1 Ca(2+) ion per subunit.</text>
</comment>
<comment type="activity regulation">
    <text evidence="3 6">Hydrolysis of beta-cyclodextrin is inhibited by Cu(2+), Zn(2+) and Ag(+), and activated by Ca(2+), EGTA and EDTA. Activity is increased over twofold in the presence of 5 mM EDTA (PubMed:9606956). Competitively inhibited by acarbose and methyl 6-amino-6-deoxy-alpha-D-glucopyranoside by reducing the rate of the ring opening step of the reaction (PubMed:10620329).</text>
</comment>
<comment type="biophysicochemical properties">
    <kinetics>
        <KM evidence="3">1.23 mM for alpha-cyclodextrin (at pH 7.0 and 50 degrees Celsius)</KM>
        <KM evidence="3">0.83 mM for beta-cyclodextrin (at pH 7.0 and 50 degrees Celsius)</KM>
        <KM evidence="3">0.92 mM for gamma-cyclodextrin (at pH 7.0 and 50 degrees Celsius)</KM>
        <KM evidence="3">3.01 mg/ml for soluble starch (at pH 7.0 and 50 degrees Celsius)</KM>
        <KM evidence="3">2.11 mg/ml for pullulan (at pH 7.0 and 50 degrees Celsius)</KM>
        <KM evidence="5">0.515 mg/ml for beta-cyclodextrin (at pH 7.0 and 50 degrees Celsius)</KM>
        <KM evidence="5">1.52 mg/ml for amylose</KM>
        <KM evidence="5">55.15 mg/ml for amylopectin</KM>
        <KM evidence="4">1.43 mM for beta-cyclodextrin (with dimeric form of the enzyme at pH 6.0 and 50 degrees Celsius)</KM>
        <KM evidence="4">0.7 mM for beta-cyclodextrin (with dodecameric form of the enzyme at pH 7.0 and 50 degrees Celsius)</KM>
        <Vmax evidence="4">320.5 umol/min/mg enzyme with beta-cyclodextrin as substrate (at pH 7.5 and 50 degrees Celsius)</Vmax>
        <text evidence="4 5">kcat is 78.18 sec(-1) with beta-cyclodextrin as substrate. kcat is 22.11 sec(-1) with amylose as substrate. kcat is 50.36 sec(-1) with amylopectin as substrate (PubMed:16536613). kcat is 101 min(-1) for dimeric form of the enzyme with beta-cyclodextrin as substrate. kcat is 521 min(-1) for dodecameric form of the enzyme with beta-cyclodextrin as substrate (PubMed:11923309).</text>
    </kinetics>
    <phDependence>
        <text evidence="5 6">Optimum pH for hydrolysis of beta-cyclodextrin is approximately 7.5 (PubMed:16536613, PubMed:9606956). Optimum pH for hydrolysis of soluble starch is 6.0 and 6.0-7.0 for hydrolysis of pullulan (PubMed:9606956).</text>
    </phDependence>
    <temperatureDependence>
        <text evidence="5 6">Optimum temperature is 50 degrees Celsius for hydrolysis of beta-cyclodextrin (PubMed:16536613, PubMed:9606956). It is elevated from 40 to 50 degrees Celsius by addition of Ca(2+), and the thermal activity is retained more than 80% at 60 degrees Celsius in the presence of Ca(2+). The optimum temperature is between 40-50 degrees Celsius for hydrolysis of soluble starch, and it is 50 degrees Celsius for hydrolysis of pullulan (PubMed:9606956).</text>
    </temperatureDependence>
</comment>
<comment type="subunit">
    <text evidence="4 6">Monomer (PubMed:11923309, PubMed:9606956). Depending on the pH of the solution, exists as a monomer, a homodimer or as an assembly of six homodimers forming a dodecamer, which is catalytically the most efficient form of the enzyme (PubMed:11923309).</text>
</comment>
<comment type="biotechnology">
    <text evidence="5 12 13">Cyclomaltodextrins form inclusion complexes with many water-insoluble compounds that have applications in the food and drug industries. The capability of this enzyme to hydrolyze cyclomaltodextrins is of importance for the release of substances from these inclusion complexes (PubMed:10620329, PubMed:9606956). This enzyme can be used to modify rice starch structure to produce starch, which has a decreased amylose content, or it could be used to produce starch, which is free of amylose altogether. Cooked rice treated with this enzyme has a significantly slower retrogradation (PubMed:16536613).</text>
</comment>
<comment type="similarity">
    <text evidence="11">Belongs to the glycosyl hydrolase 13 family.</text>
</comment>
<sequence length="558" mass="64888">MFLEAVYHRPRKNWSYAYNGTTVHLRIRTKKDDMTAVYALAGDKYMWDHTMEYVPMTKLATDELFDYWECEVTPPYRRVKYGFLLQQGHEKRWMTEYDFLTEPPRNPDRLFEYPFINPVDVFQPPAWVKDAIFYQIFPERFANGDTRNDPEGTLPWGSADPTPSCFFGGDLQGVIDHLDHLSKLGVNAVYFTPLFKATTNHKYDTEDYFQIDPQFGDKDTLKKLVDLCHERGIRVLLDAVFNHSGRTFPPFVDVLKNGEKSKYKDWFHIRSLPLEVVDGIPTYDTFAFEPLMPKLNTEHPDVKEYLLKAAEYWIRETGIDGWRLDVANEVSHQFWREFRRVVKQANPDAYILGEVWHESSIWLEGDQFDAVMNYPFTNAVLDFFIHQIADAEKFSFMLGKQLAGYPRQASEVMFNLLDSHDTARLLTQADGDKRKMKLAVLFQFTYFGTPCIYYGDEVGLDGGHDPGCRKCMEWDETKHDKDLFAFYQTVIRLRQAHAALRTGTFKFLTAEKNSRQIAYLREDDQDTILVVMNNDKAGHTLRCLSGMHSGPICGTTMS</sequence>
<accession>Q59226</accession>
<organism evidence="14">
    <name type="scientific">Bacillus sp</name>
    <dbReference type="NCBI Taxonomy" id="1409"/>
    <lineage>
        <taxon>Bacteria</taxon>
        <taxon>Bacillati</taxon>
        <taxon>Bacillota</taxon>
        <taxon>Bacilli</taxon>
        <taxon>Bacillales</taxon>
        <taxon>Bacillaceae</taxon>
        <taxon>Bacillus</taxon>
    </lineage>
</organism>
<gene>
    <name evidence="14" type="primary">CDI5</name>
</gene>
<evidence type="ECO:0000250" key="1">
    <source>
        <dbReference type="UniProtKB" id="P13507"/>
    </source>
</evidence>
<evidence type="ECO:0000250" key="2">
    <source>
        <dbReference type="UniProtKB" id="P38940"/>
    </source>
</evidence>
<evidence type="ECO:0000269" key="3">
    <source>
    </source>
</evidence>
<evidence type="ECO:0000269" key="4">
    <source>
    </source>
</evidence>
<evidence type="ECO:0000269" key="5">
    <source>
    </source>
</evidence>
<evidence type="ECO:0000269" key="6">
    <source>
    </source>
</evidence>
<evidence type="ECO:0000303" key="7">
    <source>
    </source>
</evidence>
<evidence type="ECO:0000303" key="8">
    <source>
    </source>
</evidence>
<evidence type="ECO:0000303" key="9">
    <source>
    </source>
</evidence>
<evidence type="ECO:0000303" key="10">
    <source>
    </source>
</evidence>
<evidence type="ECO:0000305" key="11"/>
<evidence type="ECO:0000305" key="12">
    <source>
    </source>
</evidence>
<evidence type="ECO:0000305" key="13">
    <source>
    </source>
</evidence>
<evidence type="ECO:0000312" key="14">
    <source>
        <dbReference type="EMBL" id="AAA92925.1"/>
    </source>
</evidence>
<evidence type="ECO:0007744" key="15">
    <source>
        <dbReference type="PDB" id="1EA9"/>
    </source>
</evidence>
<evidence type="ECO:0007829" key="16">
    <source>
        <dbReference type="PDB" id="1EA9"/>
    </source>
</evidence>
<dbReference type="EC" id="3.2.1.135" evidence="6"/>
<dbReference type="EC" id="3.2.1.54" evidence="3 4 5 6 14"/>
<dbReference type="EMBL" id="U49646">
    <property type="protein sequence ID" value="AAA92925.1"/>
    <property type="molecule type" value="Genomic_DNA"/>
</dbReference>
<dbReference type="PDB" id="1EA9">
    <property type="method" value="X-ray"/>
    <property type="resolution" value="3.20 A"/>
    <property type="chains" value="C/D=1-541"/>
</dbReference>
<dbReference type="PDBsum" id="1EA9"/>
<dbReference type="SMR" id="Q59226"/>
<dbReference type="CAZy" id="CBM34">
    <property type="family name" value="Carbohydrate-Binding Module Family 34"/>
</dbReference>
<dbReference type="CAZy" id="GH13">
    <property type="family name" value="Glycoside Hydrolase Family 13"/>
</dbReference>
<dbReference type="KEGG" id="ag:AAA92925"/>
<dbReference type="EvolutionaryTrace" id="Q59226"/>
<dbReference type="GO" id="GO:0005509">
    <property type="term" value="F:calcium ion binding"/>
    <property type="evidence" value="ECO:0000250"/>
    <property type="project" value="UniProtKB"/>
</dbReference>
<dbReference type="GO" id="GO:0047798">
    <property type="term" value="F:cyclomaltodextrinase activity"/>
    <property type="evidence" value="ECO:0000314"/>
    <property type="project" value="UniProtKB"/>
</dbReference>
<dbReference type="GO" id="GO:0005536">
    <property type="term" value="F:D-glucose binding"/>
    <property type="evidence" value="ECO:0000250"/>
    <property type="project" value="UniProtKB"/>
</dbReference>
<dbReference type="GO" id="GO:0042802">
    <property type="term" value="F:identical protein binding"/>
    <property type="evidence" value="ECO:0000314"/>
    <property type="project" value="UniProtKB"/>
</dbReference>
<dbReference type="GO" id="GO:0042803">
    <property type="term" value="F:protein homodimerization activity"/>
    <property type="evidence" value="ECO:0000314"/>
    <property type="project" value="UniProtKB"/>
</dbReference>
<dbReference type="GO" id="GO:2000897">
    <property type="term" value="P:amylopectin catabolic process"/>
    <property type="evidence" value="ECO:0000314"/>
    <property type="project" value="UniProtKB"/>
</dbReference>
<dbReference type="GO" id="GO:0051678">
    <property type="term" value="P:pullulan catabolic process"/>
    <property type="evidence" value="ECO:0000314"/>
    <property type="project" value="UniProtKB"/>
</dbReference>
<dbReference type="GO" id="GO:0005983">
    <property type="term" value="P:starch catabolic process"/>
    <property type="evidence" value="ECO:0000314"/>
    <property type="project" value="UniProtKB"/>
</dbReference>
<dbReference type="CDD" id="cd11338">
    <property type="entry name" value="AmyAc_CMD"/>
    <property type="match status" value="1"/>
</dbReference>
<dbReference type="CDD" id="cd02857">
    <property type="entry name" value="E_set_CDase_PDE_N"/>
    <property type="match status" value="1"/>
</dbReference>
<dbReference type="Gene3D" id="3.20.20.80">
    <property type="entry name" value="Glycosidases"/>
    <property type="match status" value="1"/>
</dbReference>
<dbReference type="Gene3D" id="2.60.40.1180">
    <property type="entry name" value="Golgi alpha-mannosidase II"/>
    <property type="match status" value="1"/>
</dbReference>
<dbReference type="Gene3D" id="2.60.40.10">
    <property type="entry name" value="Immunoglobulins"/>
    <property type="match status" value="1"/>
</dbReference>
<dbReference type="Gene3D" id="3.90.400.10">
    <property type="entry name" value="Oligo-1,6-glucosidase, Domain 2"/>
    <property type="match status" value="1"/>
</dbReference>
<dbReference type="InterPro" id="IPR006047">
    <property type="entry name" value="Glyco_hydro_13_cat_dom"/>
</dbReference>
<dbReference type="InterPro" id="IPR004185">
    <property type="entry name" value="Glyco_hydro_13_lg-like_dom"/>
</dbReference>
<dbReference type="InterPro" id="IPR013780">
    <property type="entry name" value="Glyco_hydro_b"/>
</dbReference>
<dbReference type="InterPro" id="IPR017853">
    <property type="entry name" value="Glycoside_hydrolase_SF"/>
</dbReference>
<dbReference type="InterPro" id="IPR013783">
    <property type="entry name" value="Ig-like_fold"/>
</dbReference>
<dbReference type="InterPro" id="IPR032091">
    <property type="entry name" value="Malt_amylase-like_C"/>
</dbReference>
<dbReference type="InterPro" id="IPR045857">
    <property type="entry name" value="O16G_dom_2"/>
</dbReference>
<dbReference type="PANTHER" id="PTHR10357">
    <property type="entry name" value="ALPHA-AMYLASE FAMILY MEMBER"/>
    <property type="match status" value="1"/>
</dbReference>
<dbReference type="PANTHER" id="PTHR10357:SF210">
    <property type="entry name" value="MALTODEXTRIN GLUCOSIDASE"/>
    <property type="match status" value="1"/>
</dbReference>
<dbReference type="Pfam" id="PF00128">
    <property type="entry name" value="Alpha-amylase"/>
    <property type="match status" value="1"/>
</dbReference>
<dbReference type="Pfam" id="PF02903">
    <property type="entry name" value="Alpha-amylase_N"/>
    <property type="match status" value="1"/>
</dbReference>
<dbReference type="Pfam" id="PF16657">
    <property type="entry name" value="Malt_amylase_C"/>
    <property type="match status" value="1"/>
</dbReference>
<dbReference type="SMART" id="SM00642">
    <property type="entry name" value="Aamy"/>
    <property type="match status" value="1"/>
</dbReference>
<dbReference type="SUPFAM" id="SSF51445">
    <property type="entry name" value="(Trans)glycosidases"/>
    <property type="match status" value="1"/>
</dbReference>
<dbReference type="SUPFAM" id="SSF51011">
    <property type="entry name" value="Glycosyl hydrolase domain"/>
    <property type="match status" value="1"/>
</dbReference>
<protein>
    <recommendedName>
        <fullName evidence="7 8 9 10 14">Cyclomaltodextrinase</fullName>
        <shortName evidence="7 8 9 10">CDase</shortName>
        <shortName evidence="7 9 10">CDase I-5</shortName>
        <ecNumber evidence="6">3.2.1.135</ecNumber>
        <ecNumber evidence="3 4 5 6 14">3.2.1.54</ecNumber>
    </recommendedName>
    <alternativeName>
        <fullName evidence="7 10">Cyclomaltodextrin hydrolase, decycling</fullName>
    </alternativeName>
</protein>
<feature type="chain" id="PRO_0000454653" description="Cyclomaltodextrinase">
    <location>
        <begin position="1"/>
        <end position="558"/>
    </location>
</feature>
<feature type="active site" description="Nucleophile" evidence="2">
    <location>
        <position position="325"/>
    </location>
</feature>
<feature type="active site" description="Proton donor" evidence="2">
    <location>
        <position position="354"/>
    </location>
</feature>
<feature type="binding site" evidence="2">
    <location>
        <position position="143"/>
    </location>
    <ligand>
        <name>Ca(2+)</name>
        <dbReference type="ChEBI" id="CHEBI:29108"/>
    </ligand>
</feature>
<feature type="binding site" evidence="2">
    <location>
        <position position="168"/>
    </location>
    <ligand>
        <name>Ca(2+)</name>
        <dbReference type="ChEBI" id="CHEBI:29108"/>
    </ligand>
</feature>
<feature type="binding site" evidence="2">
    <location>
        <position position="170"/>
    </location>
    <ligand>
        <name>Ca(2+)</name>
        <dbReference type="ChEBI" id="CHEBI:29108"/>
    </ligand>
</feature>
<feature type="binding site" evidence="2">
    <location>
        <position position="243"/>
    </location>
    <ligand>
        <name>substrate</name>
    </ligand>
</feature>
<feature type="binding site" evidence="2">
    <location>
        <position position="323"/>
    </location>
    <ligand>
        <name>substrate</name>
    </ligand>
</feature>
<feature type="binding site" evidence="2">
    <location>
        <begin position="420"/>
        <end position="421"/>
    </location>
    <ligand>
        <name>substrate</name>
    </ligand>
</feature>
<feature type="binding site" evidence="2">
    <location>
        <position position="465"/>
    </location>
    <ligand>
        <name>substrate</name>
    </ligand>
</feature>
<feature type="binding site" evidence="2">
    <location>
        <position position="469"/>
    </location>
    <ligand>
        <name>substrate</name>
    </ligand>
</feature>
<feature type="site" description="Transition state stabilizer" evidence="1">
    <location>
        <position position="421"/>
    </location>
</feature>
<feature type="mutagenesis site" description="Decreased activity with beta-cyclodextrin as substrate, but an increase in starch hydrolyzing activity compared to the wild type. No effect in pullulan hydrolyzing activity." evidence="6">
    <original>V</original>
    <variation>T</variation>
    <location>
        <position position="380"/>
    </location>
</feature>
<feature type="mutagenesis site" description="Decreased activity with starch as substrate, but an increase in beta-cyclodextrin hydrolyzing activity compared to the wild type. No effect in pullulan hydrolyzing activity." evidence="6">
    <original>I</original>
    <variation>E</variation>
    <location>
        <position position="388"/>
    </location>
</feature>
<feature type="helix" evidence="16">
    <location>
        <begin position="3"/>
        <end position="5"/>
    </location>
</feature>
<feature type="strand" evidence="16">
    <location>
        <begin position="14"/>
        <end position="21"/>
    </location>
</feature>
<feature type="strand" evidence="16">
    <location>
        <begin position="35"/>
        <end position="42"/>
    </location>
</feature>
<feature type="strand" evidence="16">
    <location>
        <begin position="44"/>
        <end position="46"/>
    </location>
</feature>
<feature type="strand" evidence="16">
    <location>
        <begin position="52"/>
        <end position="56"/>
    </location>
</feature>
<feature type="strand" evidence="16">
    <location>
        <begin position="58"/>
        <end position="61"/>
    </location>
</feature>
<feature type="strand" evidence="16">
    <location>
        <begin position="66"/>
        <end position="68"/>
    </location>
</feature>
<feature type="strand" evidence="16">
    <location>
        <begin position="79"/>
        <end position="81"/>
    </location>
</feature>
<feature type="strand" evidence="16">
    <location>
        <begin position="96"/>
        <end position="99"/>
    </location>
</feature>
<feature type="helix" evidence="16">
    <location>
        <begin position="107"/>
        <end position="109"/>
    </location>
</feature>
<feature type="strand" evidence="16">
    <location>
        <begin position="110"/>
        <end position="113"/>
    </location>
</feature>
<feature type="turn" evidence="16">
    <location>
        <begin position="118"/>
        <end position="120"/>
    </location>
</feature>
<feature type="helix" evidence="16">
    <location>
        <begin position="127"/>
        <end position="130"/>
    </location>
</feature>
<feature type="strand" evidence="16">
    <location>
        <begin position="158"/>
        <end position="160"/>
    </location>
</feature>
<feature type="helix" evidence="16">
    <location>
        <begin position="171"/>
        <end position="176"/>
    </location>
</feature>
<feature type="helix" evidence="16">
    <location>
        <begin position="178"/>
        <end position="184"/>
    </location>
</feature>
<feature type="strand" evidence="16">
    <location>
        <begin position="187"/>
        <end position="191"/>
    </location>
</feature>
<feature type="strand" evidence="16">
    <location>
        <begin position="198"/>
        <end position="201"/>
    </location>
</feature>
<feature type="turn" evidence="16">
    <location>
        <begin position="213"/>
        <end position="215"/>
    </location>
</feature>
<feature type="helix" evidence="16">
    <location>
        <begin position="218"/>
        <end position="228"/>
    </location>
</feature>
<feature type="turn" evidence="16">
    <location>
        <begin position="229"/>
        <end position="232"/>
    </location>
</feature>
<feature type="strand" evidence="16">
    <location>
        <begin position="234"/>
        <end position="238"/>
    </location>
</feature>
<feature type="turn" evidence="16">
    <location>
        <begin position="246"/>
        <end position="248"/>
    </location>
</feature>
<feature type="helix" evidence="16">
    <location>
        <begin position="249"/>
        <end position="255"/>
    </location>
</feature>
<feature type="turn" evidence="16">
    <location>
        <begin position="256"/>
        <end position="260"/>
    </location>
</feature>
<feature type="turn" evidence="16">
    <location>
        <begin position="262"/>
        <end position="265"/>
    </location>
</feature>
<feature type="strand" evidence="16">
    <location>
        <begin position="271"/>
        <end position="273"/>
    </location>
</feature>
<feature type="strand" evidence="16">
    <location>
        <begin position="285"/>
        <end position="288"/>
    </location>
</feature>
<feature type="strand" evidence="16">
    <location>
        <begin position="292"/>
        <end position="294"/>
    </location>
</feature>
<feature type="helix" evidence="16">
    <location>
        <begin position="300"/>
        <end position="317"/>
    </location>
</feature>
<feature type="strand" evidence="16">
    <location>
        <begin position="320"/>
        <end position="324"/>
    </location>
</feature>
<feature type="helix" evidence="16">
    <location>
        <begin position="332"/>
        <end position="345"/>
    </location>
</feature>
<feature type="strand" evidence="16">
    <location>
        <begin position="350"/>
        <end position="353"/>
    </location>
</feature>
<feature type="turn" evidence="16">
    <location>
        <begin position="360"/>
        <end position="362"/>
    </location>
</feature>
<feature type="strand" evidence="16">
    <location>
        <begin position="364"/>
        <end position="367"/>
    </location>
</feature>
<feature type="strand" evidence="16">
    <location>
        <begin position="369"/>
        <end position="372"/>
    </location>
</feature>
<feature type="helix" evidence="16">
    <location>
        <begin position="374"/>
        <end position="383"/>
    </location>
</feature>
<feature type="helix" evidence="16">
    <location>
        <begin position="391"/>
        <end position="400"/>
    </location>
</feature>
<feature type="turn" evidence="16">
    <location>
        <begin position="401"/>
        <end position="404"/>
    </location>
</feature>
<feature type="helix" evidence="16">
    <location>
        <begin position="407"/>
        <end position="411"/>
    </location>
</feature>
<feature type="helix" evidence="16">
    <location>
        <begin position="425"/>
        <end position="429"/>
    </location>
</feature>
<feature type="helix" evidence="16">
    <location>
        <begin position="433"/>
        <end position="443"/>
    </location>
</feature>
<feature type="strand" evidence="16">
    <location>
        <begin position="446"/>
        <end position="450"/>
    </location>
</feature>
<feature type="helix" evidence="16">
    <location>
        <begin position="465"/>
        <end position="468"/>
    </location>
</feature>
<feature type="helix" evidence="16">
    <location>
        <begin position="481"/>
        <end position="496"/>
    </location>
</feature>
<feature type="helix" evidence="16">
    <location>
        <begin position="499"/>
        <end position="502"/>
    </location>
</feature>
<feature type="strand" evidence="16">
    <location>
        <begin position="516"/>
        <end position="522"/>
    </location>
</feature>
<feature type="strand" evidence="16">
    <location>
        <begin position="527"/>
        <end position="533"/>
    </location>
</feature>
<feature type="strand" evidence="16">
    <location>
        <begin position="535"/>
        <end position="537"/>
    </location>
</feature>
<feature type="strand" evidence="16">
    <location>
        <begin position="539"/>
        <end position="541"/>
    </location>
</feature>